<organism>
    <name type="scientific">Acanthamoeba polyphaga mimivirus</name>
    <name type="common">APMV</name>
    <dbReference type="NCBI Taxonomy" id="212035"/>
    <lineage>
        <taxon>Viruses</taxon>
        <taxon>Varidnaviria</taxon>
        <taxon>Bamfordvirae</taxon>
        <taxon>Nucleocytoviricota</taxon>
        <taxon>Megaviricetes</taxon>
        <taxon>Imitervirales</taxon>
        <taxon>Mimiviridae</taxon>
        <taxon>Megamimivirinae</taxon>
        <taxon>Mimivirus</taxon>
        <taxon>Mimivirus bradfordmassiliense</taxon>
    </lineage>
</organism>
<reference key="1">
    <citation type="journal article" date="2004" name="Science">
        <title>The 1.2-megabase genome sequence of Mimivirus.</title>
        <authorList>
            <person name="Raoult D."/>
            <person name="Audic S."/>
            <person name="Robert C."/>
            <person name="Abergel C."/>
            <person name="Renesto P."/>
            <person name="Ogata H."/>
            <person name="La Scola B."/>
            <person name="Susan M."/>
            <person name="Claverie J.-M."/>
        </authorList>
    </citation>
    <scope>NUCLEOTIDE SEQUENCE [LARGE SCALE GENOMIC DNA]</scope>
    <source>
        <strain>Rowbotham-Bradford</strain>
    </source>
</reference>
<keyword id="KW-1185">Reference proteome</keyword>
<gene>
    <name type="ordered locus">MIMI_L138</name>
</gene>
<name>YL138_MIMIV</name>
<feature type="chain" id="PRO_0000071219" description="Uncharacterized protein L138">
    <location>
        <begin position="1"/>
        <end position="883"/>
    </location>
</feature>
<feature type="region of interest" description="Disordered" evidence="1">
    <location>
        <begin position="258"/>
        <end position="373"/>
    </location>
</feature>
<feature type="compositionally biased region" description="Low complexity" evidence="1">
    <location>
        <begin position="259"/>
        <end position="268"/>
    </location>
</feature>
<feature type="compositionally biased region" description="Low complexity" evidence="1">
    <location>
        <begin position="277"/>
        <end position="317"/>
    </location>
</feature>
<feature type="compositionally biased region" description="Low complexity" evidence="1">
    <location>
        <begin position="324"/>
        <end position="333"/>
    </location>
</feature>
<feature type="compositionally biased region" description="Polar residues" evidence="1">
    <location>
        <begin position="334"/>
        <end position="347"/>
    </location>
</feature>
<feature type="compositionally biased region" description="Low complexity" evidence="1">
    <location>
        <begin position="348"/>
        <end position="368"/>
    </location>
</feature>
<evidence type="ECO:0000256" key="1">
    <source>
        <dbReference type="SAM" id="MobiDB-lite"/>
    </source>
</evidence>
<evidence type="ECO:0000305" key="2"/>
<sequence>MSNKQKIPCFVLIYEQVDIIKKCLSFLIKYSDRLNIIIVENYSSNTQTIIKPYVIDLINNKLIWKYYLFEKNIYNVAIHISINHAIKTYLDPNEYPYVYVTDGDLTIEDSNWIDEQLSILDKCPNAFVCGCLLDYSNLPIETIPDSVGWIQKYTDRGDYNVGITGTVFNSYRTPVLIEAMKYLNDNGLKYLDYHLHHYHHEIKNMIWTCTKKAKSYHLTWDLYADPENPYTIYKLRNYKTMWFNNTEASYQLFEHDDINNQSDNQSNSELDNRPNIEPNGQSNSEPSNQPNNEPNYQSNSEPSNQPNSEPNDQSNSELDNQSINEPNTEPNTESNGQSNSELNNQSDNHPNNEPNSEPNNEPNNQFNKPDNEPDDKIILKVVSTGFGKGTEKSGLYFQDQFYPGTRGFNIYTITQNKSITFQNYDSSGKQCIGELVRYIKTFYDTDHEYLIVLVDDDATRSININFMNEVVELYDLNKMYMLRVRSSYYFVYNLKQKKLIDENASDFITVKNSYNRKDLDLLSETQTTTINPTTINPKTNNINNPTNYVNVDESIEINNLNDINGLELDGLKTVKIMSEDNSDLEFSENEIEEPIEPIKYHIVCRESIYHYFKDYVESFIDKLNSDQSNNPKEKSTANSIISNQIHIYNYIDSPNHVYIFCQCIDDHLFKKSFNKMVIFTEQLTKKQELNQISRYVNHKIPVIHYSIENMKINNNPTDIYIPYQYNKKEIKVLRNLYLNTPKEYDVAFCGSMSPRRRKIIDDIKSNGLKVLELVRGYWGNIRDCSIAKCKVLVNVHYSHDYNVYEPMRCDRWAFATMPIVSEDSIYDELLDVKKYGLVTFCPYDELVTKIIQTLKGANKHNLSAIKIIKHSRKKKFYQTLQHL</sequence>
<proteinExistence type="inferred from homology"/>
<protein>
    <recommendedName>
        <fullName>Uncharacterized protein L138</fullName>
    </recommendedName>
</protein>
<accession>Q5UPK9</accession>
<organismHost>
    <name type="scientific">Acanthamoeba polyphaga</name>
    <name type="common">Amoeba</name>
    <dbReference type="NCBI Taxonomy" id="5757"/>
</organismHost>
<dbReference type="EMBL" id="AY653733">
    <property type="protein sequence ID" value="AAV50413.1"/>
    <property type="molecule type" value="Genomic_DNA"/>
</dbReference>
<dbReference type="CAZy" id="GT2">
    <property type="family name" value="Glycosyltransferase Family 2"/>
</dbReference>
<dbReference type="KEGG" id="vg:9924738"/>
<dbReference type="Proteomes" id="UP000001134">
    <property type="component" value="Genome"/>
</dbReference>
<dbReference type="InterPro" id="IPR029044">
    <property type="entry name" value="Nucleotide-diphossugar_trans"/>
</dbReference>
<dbReference type="SUPFAM" id="SSF53448">
    <property type="entry name" value="Nucleotide-diphospho-sugar transferases"/>
    <property type="match status" value="1"/>
</dbReference>
<comment type="similarity">
    <text evidence="2">Belongs to the mimivirus L137 family.</text>
</comment>